<organism>
    <name type="scientific">Yersinia pestis</name>
    <dbReference type="NCBI Taxonomy" id="632"/>
    <lineage>
        <taxon>Bacteria</taxon>
        <taxon>Pseudomonadati</taxon>
        <taxon>Pseudomonadota</taxon>
        <taxon>Gammaproteobacteria</taxon>
        <taxon>Enterobacterales</taxon>
        <taxon>Yersiniaceae</taxon>
        <taxon>Yersinia</taxon>
    </lineage>
</organism>
<sequence>MMQHLFEKLFRAESMSQEESQQLFAAIVRGELEPSQLAAVLISMKVRGETPAEIAGAAQALLADAQHFPRPDYLFADIVGTGGDGTNSINISTASAFVAASCGVKVAKHGNRSVSSRSGSSDLLAAFGIRLDMSAEQSRLALDDLGVCFLFAPQYHTGFRHAMPVRQQLKTRTLFNVLGPLINPARPPLALIGVYSPELVLPIAQTLKVLGYQRAAVVHGGGMDEVAIHAPTQVAELNNGSIESYQLTPEDFGLNRYPLAALQGGMPEENRDILARLLQGKGETAHAAAVAANVALLLKLYGQENLRHNAQQALEMIHSGQAFDRVTALAARG</sequence>
<gene>
    <name evidence="1" type="primary">trpD</name>
    <name type="ordered locus">YPO2206</name>
    <name type="ordered locus">y2050</name>
    <name type="ordered locus">YP_2004</name>
</gene>
<protein>
    <recommendedName>
        <fullName evidence="1">Anthranilate phosphoribosyltransferase</fullName>
        <ecNumber evidence="1">2.4.2.18</ecNumber>
    </recommendedName>
</protein>
<reference key="1">
    <citation type="journal article" date="2001" name="Nature">
        <title>Genome sequence of Yersinia pestis, the causative agent of plague.</title>
        <authorList>
            <person name="Parkhill J."/>
            <person name="Wren B.W."/>
            <person name="Thomson N.R."/>
            <person name="Titball R.W."/>
            <person name="Holden M.T.G."/>
            <person name="Prentice M.B."/>
            <person name="Sebaihia M."/>
            <person name="James K.D."/>
            <person name="Churcher C.M."/>
            <person name="Mungall K.L."/>
            <person name="Baker S."/>
            <person name="Basham D."/>
            <person name="Bentley S.D."/>
            <person name="Brooks K."/>
            <person name="Cerdeno-Tarraga A.-M."/>
            <person name="Chillingworth T."/>
            <person name="Cronin A."/>
            <person name="Davies R.M."/>
            <person name="Davis P."/>
            <person name="Dougan G."/>
            <person name="Feltwell T."/>
            <person name="Hamlin N."/>
            <person name="Holroyd S."/>
            <person name="Jagels K."/>
            <person name="Karlyshev A.V."/>
            <person name="Leather S."/>
            <person name="Moule S."/>
            <person name="Oyston P.C.F."/>
            <person name="Quail M.A."/>
            <person name="Rutherford K.M."/>
            <person name="Simmonds M."/>
            <person name="Skelton J."/>
            <person name="Stevens K."/>
            <person name="Whitehead S."/>
            <person name="Barrell B.G."/>
        </authorList>
    </citation>
    <scope>NUCLEOTIDE SEQUENCE [LARGE SCALE GENOMIC DNA]</scope>
    <source>
        <strain>CO-92 / Biovar Orientalis</strain>
    </source>
</reference>
<reference key="2">
    <citation type="journal article" date="2002" name="J. Bacteriol.">
        <title>Genome sequence of Yersinia pestis KIM.</title>
        <authorList>
            <person name="Deng W."/>
            <person name="Burland V."/>
            <person name="Plunkett G. III"/>
            <person name="Boutin A."/>
            <person name="Mayhew G.F."/>
            <person name="Liss P."/>
            <person name="Perna N.T."/>
            <person name="Rose D.J."/>
            <person name="Mau B."/>
            <person name="Zhou S."/>
            <person name="Schwartz D.C."/>
            <person name="Fetherston J.D."/>
            <person name="Lindler L.E."/>
            <person name="Brubaker R.R."/>
            <person name="Plano G.V."/>
            <person name="Straley S.C."/>
            <person name="McDonough K.A."/>
            <person name="Nilles M.L."/>
            <person name="Matson J.S."/>
            <person name="Blattner F.R."/>
            <person name="Perry R.D."/>
        </authorList>
    </citation>
    <scope>NUCLEOTIDE SEQUENCE [LARGE SCALE GENOMIC DNA]</scope>
    <source>
        <strain>KIM10+ / Biovar Mediaevalis</strain>
    </source>
</reference>
<reference key="3">
    <citation type="journal article" date="2004" name="DNA Res.">
        <title>Complete genome sequence of Yersinia pestis strain 91001, an isolate avirulent to humans.</title>
        <authorList>
            <person name="Song Y."/>
            <person name="Tong Z."/>
            <person name="Wang J."/>
            <person name="Wang L."/>
            <person name="Guo Z."/>
            <person name="Han Y."/>
            <person name="Zhang J."/>
            <person name="Pei D."/>
            <person name="Zhou D."/>
            <person name="Qin H."/>
            <person name="Pang X."/>
            <person name="Han Y."/>
            <person name="Zhai J."/>
            <person name="Li M."/>
            <person name="Cui B."/>
            <person name="Qi Z."/>
            <person name="Jin L."/>
            <person name="Dai R."/>
            <person name="Chen F."/>
            <person name="Li S."/>
            <person name="Ye C."/>
            <person name="Du Z."/>
            <person name="Lin W."/>
            <person name="Wang J."/>
            <person name="Yu J."/>
            <person name="Yang H."/>
            <person name="Wang J."/>
            <person name="Huang P."/>
            <person name="Yang R."/>
        </authorList>
    </citation>
    <scope>NUCLEOTIDE SEQUENCE [LARGE SCALE GENOMIC DNA]</scope>
    <source>
        <strain>91001 / Biovar Mediaevalis</strain>
    </source>
</reference>
<accession>Q8ZEG7</accession>
<accession>Q0WEW1</accession>
<dbReference type="EC" id="2.4.2.18" evidence="1"/>
<dbReference type="EMBL" id="AL590842">
    <property type="protein sequence ID" value="CAL20835.1"/>
    <property type="molecule type" value="Genomic_DNA"/>
</dbReference>
<dbReference type="EMBL" id="AE009952">
    <property type="status" value="NOT_ANNOTATED_CDS"/>
    <property type="molecule type" value="Genomic_DNA"/>
</dbReference>
<dbReference type="EMBL" id="AE017042">
    <property type="protein sequence ID" value="AAS62220.1"/>
    <property type="molecule type" value="Genomic_DNA"/>
</dbReference>
<dbReference type="PIR" id="AH0268">
    <property type="entry name" value="AH0268"/>
</dbReference>
<dbReference type="SMR" id="Q8ZEG7"/>
<dbReference type="STRING" id="214092.YPO2206"/>
<dbReference type="PaxDb" id="214092-YPO2206"/>
<dbReference type="EnsemblBacteria" id="AAS62220">
    <property type="protein sequence ID" value="AAS62220"/>
    <property type="gene ID" value="YP_2004"/>
</dbReference>
<dbReference type="KEGG" id="ype:YPO2206"/>
<dbReference type="KEGG" id="ypm:YP_2004"/>
<dbReference type="eggNOG" id="COG0547">
    <property type="taxonomic scope" value="Bacteria"/>
</dbReference>
<dbReference type="HOGENOM" id="CLU_034315_2_1_6"/>
<dbReference type="OMA" id="GPMTNPA"/>
<dbReference type="UniPathway" id="UPA00035">
    <property type="reaction ID" value="UER00041"/>
</dbReference>
<dbReference type="Proteomes" id="UP000000815">
    <property type="component" value="Chromosome"/>
</dbReference>
<dbReference type="Proteomes" id="UP000001019">
    <property type="component" value="Chromosome"/>
</dbReference>
<dbReference type="Proteomes" id="UP000002490">
    <property type="component" value="Chromosome"/>
</dbReference>
<dbReference type="GO" id="GO:0005829">
    <property type="term" value="C:cytosol"/>
    <property type="evidence" value="ECO:0000318"/>
    <property type="project" value="GO_Central"/>
</dbReference>
<dbReference type="GO" id="GO:0004048">
    <property type="term" value="F:anthranilate phosphoribosyltransferase activity"/>
    <property type="evidence" value="ECO:0007669"/>
    <property type="project" value="UniProtKB-UniRule"/>
</dbReference>
<dbReference type="GO" id="GO:0000287">
    <property type="term" value="F:magnesium ion binding"/>
    <property type="evidence" value="ECO:0007669"/>
    <property type="project" value="UniProtKB-UniRule"/>
</dbReference>
<dbReference type="GO" id="GO:0000162">
    <property type="term" value="P:L-tryptophan biosynthetic process"/>
    <property type="evidence" value="ECO:0000318"/>
    <property type="project" value="GO_Central"/>
</dbReference>
<dbReference type="FunFam" id="1.20.970.10:FF:000003">
    <property type="entry name" value="Anthranilate phosphoribosyltransferase"/>
    <property type="match status" value="1"/>
</dbReference>
<dbReference type="FunFam" id="3.40.1030.10:FF:000002">
    <property type="entry name" value="Anthranilate phosphoribosyltransferase"/>
    <property type="match status" value="1"/>
</dbReference>
<dbReference type="Gene3D" id="3.40.1030.10">
    <property type="entry name" value="Nucleoside phosphorylase/phosphoribosyltransferase catalytic domain"/>
    <property type="match status" value="1"/>
</dbReference>
<dbReference type="Gene3D" id="1.20.970.10">
    <property type="entry name" value="Transferase, Pyrimidine Nucleoside Phosphorylase, Chain C"/>
    <property type="match status" value="1"/>
</dbReference>
<dbReference type="HAMAP" id="MF_00211">
    <property type="entry name" value="TrpD"/>
    <property type="match status" value="1"/>
</dbReference>
<dbReference type="InterPro" id="IPR005940">
    <property type="entry name" value="Anthranilate_Pribosyl_Tfrase"/>
</dbReference>
<dbReference type="InterPro" id="IPR000312">
    <property type="entry name" value="Glycosyl_Trfase_fam3"/>
</dbReference>
<dbReference type="InterPro" id="IPR017459">
    <property type="entry name" value="Glycosyl_Trfase_fam3_N_dom"/>
</dbReference>
<dbReference type="InterPro" id="IPR036320">
    <property type="entry name" value="Glycosyl_Trfase_fam3_N_dom_sf"/>
</dbReference>
<dbReference type="InterPro" id="IPR035902">
    <property type="entry name" value="Nuc_phospho_transferase"/>
</dbReference>
<dbReference type="NCBIfam" id="TIGR01245">
    <property type="entry name" value="trpD"/>
    <property type="match status" value="1"/>
</dbReference>
<dbReference type="PANTHER" id="PTHR43285">
    <property type="entry name" value="ANTHRANILATE PHOSPHORIBOSYLTRANSFERASE"/>
    <property type="match status" value="1"/>
</dbReference>
<dbReference type="PANTHER" id="PTHR43285:SF2">
    <property type="entry name" value="ANTHRANILATE PHOSPHORIBOSYLTRANSFERASE"/>
    <property type="match status" value="1"/>
</dbReference>
<dbReference type="Pfam" id="PF02885">
    <property type="entry name" value="Glycos_trans_3N"/>
    <property type="match status" value="1"/>
</dbReference>
<dbReference type="Pfam" id="PF00591">
    <property type="entry name" value="Glycos_transf_3"/>
    <property type="match status" value="1"/>
</dbReference>
<dbReference type="SUPFAM" id="SSF52418">
    <property type="entry name" value="Nucleoside phosphorylase/phosphoribosyltransferase catalytic domain"/>
    <property type="match status" value="1"/>
</dbReference>
<dbReference type="SUPFAM" id="SSF47648">
    <property type="entry name" value="Nucleoside phosphorylase/phosphoribosyltransferase N-terminal domain"/>
    <property type="match status" value="1"/>
</dbReference>
<name>TRPD_YERPE</name>
<keyword id="KW-0028">Amino-acid biosynthesis</keyword>
<keyword id="KW-0057">Aromatic amino acid biosynthesis</keyword>
<keyword id="KW-0328">Glycosyltransferase</keyword>
<keyword id="KW-0460">Magnesium</keyword>
<keyword id="KW-0479">Metal-binding</keyword>
<keyword id="KW-1185">Reference proteome</keyword>
<keyword id="KW-0808">Transferase</keyword>
<keyword id="KW-0822">Tryptophan biosynthesis</keyword>
<feature type="chain" id="PRO_0000154506" description="Anthranilate phosphoribosyltransferase">
    <location>
        <begin position="1"/>
        <end position="333"/>
    </location>
</feature>
<feature type="binding site" evidence="1">
    <location>
        <position position="80"/>
    </location>
    <ligand>
        <name>5-phospho-alpha-D-ribose 1-diphosphate</name>
        <dbReference type="ChEBI" id="CHEBI:58017"/>
    </ligand>
</feature>
<feature type="binding site" evidence="1">
    <location>
        <position position="80"/>
    </location>
    <ligand>
        <name>anthranilate</name>
        <dbReference type="ChEBI" id="CHEBI:16567"/>
        <label>1</label>
    </ligand>
</feature>
<feature type="binding site" evidence="1">
    <location>
        <begin position="83"/>
        <end position="84"/>
    </location>
    <ligand>
        <name>5-phospho-alpha-D-ribose 1-diphosphate</name>
        <dbReference type="ChEBI" id="CHEBI:58017"/>
    </ligand>
</feature>
<feature type="binding site" evidence="1">
    <location>
        <position position="88"/>
    </location>
    <ligand>
        <name>5-phospho-alpha-D-ribose 1-diphosphate</name>
        <dbReference type="ChEBI" id="CHEBI:58017"/>
    </ligand>
</feature>
<feature type="binding site" evidence="1">
    <location>
        <begin position="90"/>
        <end position="93"/>
    </location>
    <ligand>
        <name>5-phospho-alpha-D-ribose 1-diphosphate</name>
        <dbReference type="ChEBI" id="CHEBI:58017"/>
    </ligand>
</feature>
<feature type="binding site" evidence="1">
    <location>
        <position position="92"/>
    </location>
    <ligand>
        <name>Mg(2+)</name>
        <dbReference type="ChEBI" id="CHEBI:18420"/>
        <label>1</label>
    </ligand>
</feature>
<feature type="binding site" evidence="1">
    <location>
        <begin position="108"/>
        <end position="116"/>
    </location>
    <ligand>
        <name>5-phospho-alpha-D-ribose 1-diphosphate</name>
        <dbReference type="ChEBI" id="CHEBI:58017"/>
    </ligand>
</feature>
<feature type="binding site" evidence="1">
    <location>
        <position position="111"/>
    </location>
    <ligand>
        <name>anthranilate</name>
        <dbReference type="ChEBI" id="CHEBI:16567"/>
        <label>1</label>
    </ligand>
</feature>
<feature type="binding site" evidence="1">
    <location>
        <position position="120"/>
    </location>
    <ligand>
        <name>5-phospho-alpha-D-ribose 1-diphosphate</name>
        <dbReference type="ChEBI" id="CHEBI:58017"/>
    </ligand>
</feature>
<feature type="binding site" evidence="1">
    <location>
        <position position="166"/>
    </location>
    <ligand>
        <name>anthranilate</name>
        <dbReference type="ChEBI" id="CHEBI:16567"/>
        <label>2</label>
    </ligand>
</feature>
<feature type="binding site" evidence="1">
    <location>
        <position position="224"/>
    </location>
    <ligand>
        <name>Mg(2+)</name>
        <dbReference type="ChEBI" id="CHEBI:18420"/>
        <label>2</label>
    </ligand>
</feature>
<feature type="binding site" evidence="1">
    <location>
        <position position="225"/>
    </location>
    <ligand>
        <name>Mg(2+)</name>
        <dbReference type="ChEBI" id="CHEBI:18420"/>
        <label>1</label>
    </ligand>
</feature>
<feature type="binding site" evidence="1">
    <location>
        <position position="225"/>
    </location>
    <ligand>
        <name>Mg(2+)</name>
        <dbReference type="ChEBI" id="CHEBI:18420"/>
        <label>2</label>
    </ligand>
</feature>
<evidence type="ECO:0000255" key="1">
    <source>
        <dbReference type="HAMAP-Rule" id="MF_00211"/>
    </source>
</evidence>
<comment type="function">
    <text evidence="1">Catalyzes the transfer of the phosphoribosyl group of 5-phosphorylribose-1-pyrophosphate (PRPP) to anthranilate to yield N-(5'-phosphoribosyl)-anthranilate (PRA).</text>
</comment>
<comment type="catalytic activity">
    <reaction evidence="1">
        <text>N-(5-phospho-beta-D-ribosyl)anthranilate + diphosphate = 5-phospho-alpha-D-ribose 1-diphosphate + anthranilate</text>
        <dbReference type="Rhea" id="RHEA:11768"/>
        <dbReference type="ChEBI" id="CHEBI:16567"/>
        <dbReference type="ChEBI" id="CHEBI:18277"/>
        <dbReference type="ChEBI" id="CHEBI:33019"/>
        <dbReference type="ChEBI" id="CHEBI:58017"/>
        <dbReference type="EC" id="2.4.2.18"/>
    </reaction>
</comment>
<comment type="cofactor">
    <cofactor evidence="1">
        <name>Mg(2+)</name>
        <dbReference type="ChEBI" id="CHEBI:18420"/>
    </cofactor>
    <text evidence="1">Binds 2 magnesium ions per monomer.</text>
</comment>
<comment type="pathway">
    <text evidence="1">Amino-acid biosynthesis; L-tryptophan biosynthesis; L-tryptophan from chorismate: step 2/5.</text>
</comment>
<comment type="subunit">
    <text evidence="1">Homodimer.</text>
</comment>
<comment type="similarity">
    <text evidence="1">Belongs to the anthranilate phosphoribosyltransferase family.</text>
</comment>
<proteinExistence type="inferred from homology"/>